<comment type="pathway">
    <text>Glycan metabolism; bacterial cellulose biosynthesis.</text>
</comment>
<gene>
    <name type="primary">bcsX</name>
</gene>
<organism>
    <name type="scientific">Komagataeibacter xylinus</name>
    <name type="common">Gluconacetobacter xylinus</name>
    <dbReference type="NCBI Taxonomy" id="28448"/>
    <lineage>
        <taxon>Bacteria</taxon>
        <taxon>Pseudomonadati</taxon>
        <taxon>Pseudomonadota</taxon>
        <taxon>Alphaproteobacteria</taxon>
        <taxon>Acetobacterales</taxon>
        <taxon>Acetobacteraceae</taxon>
        <taxon>Komagataeibacter</taxon>
    </lineage>
</organism>
<accession>Q9WX69</accession>
<proteinExistence type="predicted"/>
<name>BCSX_KOMXY</name>
<keyword id="KW-0135">Cellulose biosynthesis</keyword>
<dbReference type="EMBL" id="AB015803">
    <property type="protein sequence ID" value="BAA77594.1"/>
    <property type="molecule type" value="Genomic_DNA"/>
</dbReference>
<dbReference type="SMR" id="Q9WX69"/>
<dbReference type="STRING" id="1220579.GCA_001571345_02030"/>
<dbReference type="UniPathway" id="UPA00694"/>
<dbReference type="GO" id="GO:0016788">
    <property type="term" value="F:hydrolase activity, acting on ester bonds"/>
    <property type="evidence" value="ECO:0007669"/>
    <property type="project" value="UniProtKB-ARBA"/>
</dbReference>
<dbReference type="GO" id="GO:0030244">
    <property type="term" value="P:cellulose biosynthetic process"/>
    <property type="evidence" value="ECO:0007669"/>
    <property type="project" value="UniProtKB-KW"/>
</dbReference>
<dbReference type="CDD" id="cd00229">
    <property type="entry name" value="SGNH_hydrolase"/>
    <property type="match status" value="1"/>
</dbReference>
<dbReference type="Gene3D" id="3.40.50.1110">
    <property type="entry name" value="SGNH hydrolase"/>
    <property type="match status" value="1"/>
</dbReference>
<dbReference type="InterPro" id="IPR036514">
    <property type="entry name" value="SGNH_hydro_sf"/>
</dbReference>
<dbReference type="SUPFAM" id="SSF52266">
    <property type="entry name" value="SGNH hydrolase"/>
    <property type="match status" value="1"/>
</dbReference>
<reference key="1">
    <citation type="journal article" date="1999" name="DNA Res.">
        <title>Cloning of cellulose synthase genes from Acetobacter xylinum JCM 7664: implication of a novel set of cellulose synthase genes.</title>
        <authorList>
            <person name="Umeda Y."/>
            <person name="Hirano A."/>
            <person name="Ishibashi M."/>
            <person name="Akiyama H."/>
            <person name="Onizuka T."/>
            <person name="Ikeuchi M."/>
            <person name="Inoue Y."/>
        </authorList>
    </citation>
    <scope>NUCLEOTIDE SEQUENCE [GENOMIC DNA]</scope>
    <source>
        <strain>JCM 7664 / NBRC 13693</strain>
    </source>
</reference>
<protein>
    <recommendedName>
        <fullName>Protein BcsX</fullName>
    </recommendedName>
</protein>
<sequence>MPAGVAAWRRDRRHAGTARPARCADTALFRTNPQLEKYEMNALLAGLTLLIIGDSHVTFKDSLLSVLPDEFTKQGAKVVTYGVCSSTAADWVVPNPNNGCGAAERVGDAPIGAPDMKPASPPPITSLIEKWHPNVVMVILGDTMAAYGQNAVSKDWVDEQVKTLTYAIGKTACIWVGPTWGQFSPRYGKTDQRATEMASFLKGEVAPCSYVDGTALLKQGSVNTIDGIHATPESYRVWGDAIVQATLPELEKLKDAPPAPAQ</sequence>
<feature type="chain" id="PRO_0000064898" description="Protein BcsX">
    <location>
        <begin position="1"/>
        <end position="262"/>
    </location>
</feature>